<reference key="1">
    <citation type="journal article" date="2001" name="Dev. Biol.">
        <title>Vertebrate proteins related to Drosophila Naked Cuticle bind Dishevelled and antagonize Wnt signaling.</title>
        <authorList>
            <person name="Wharton K.A. Jr."/>
            <person name="Zimmermann G."/>
            <person name="Rousset R."/>
            <person name="Scott M.P."/>
        </authorList>
    </citation>
    <scope>NUCLEOTIDE SEQUENCE [MRNA] (ISOFORM 1)</scope>
    <scope>INTERACTION WITH DVL1; DVL2 AND DVL3</scope>
    <scope>TISSUE SPECIFICITY</scope>
    <scope>DEVELOPMENTAL STAGE</scope>
    <source>
        <strain>C57BL/6 X CBA</strain>
        <tissue>Lung</tissue>
    </source>
</reference>
<reference key="2">
    <citation type="journal article" date="2005" name="Science">
        <title>The transcriptional landscape of the mammalian genome.</title>
        <authorList>
            <person name="Carninci P."/>
            <person name="Kasukawa T."/>
            <person name="Katayama S."/>
            <person name="Gough J."/>
            <person name="Frith M.C."/>
            <person name="Maeda N."/>
            <person name="Oyama R."/>
            <person name="Ravasi T."/>
            <person name="Lenhard B."/>
            <person name="Wells C."/>
            <person name="Kodzius R."/>
            <person name="Shimokawa K."/>
            <person name="Bajic V.B."/>
            <person name="Brenner S.E."/>
            <person name="Batalov S."/>
            <person name="Forrest A.R."/>
            <person name="Zavolan M."/>
            <person name="Davis M.J."/>
            <person name="Wilming L.G."/>
            <person name="Aidinis V."/>
            <person name="Allen J.E."/>
            <person name="Ambesi-Impiombato A."/>
            <person name="Apweiler R."/>
            <person name="Aturaliya R.N."/>
            <person name="Bailey T.L."/>
            <person name="Bansal M."/>
            <person name="Baxter L."/>
            <person name="Beisel K.W."/>
            <person name="Bersano T."/>
            <person name="Bono H."/>
            <person name="Chalk A.M."/>
            <person name="Chiu K.P."/>
            <person name="Choudhary V."/>
            <person name="Christoffels A."/>
            <person name="Clutterbuck D.R."/>
            <person name="Crowe M.L."/>
            <person name="Dalla E."/>
            <person name="Dalrymple B.P."/>
            <person name="de Bono B."/>
            <person name="Della Gatta G."/>
            <person name="di Bernardo D."/>
            <person name="Down T."/>
            <person name="Engstrom P."/>
            <person name="Fagiolini M."/>
            <person name="Faulkner G."/>
            <person name="Fletcher C.F."/>
            <person name="Fukushima T."/>
            <person name="Furuno M."/>
            <person name="Futaki S."/>
            <person name="Gariboldi M."/>
            <person name="Georgii-Hemming P."/>
            <person name="Gingeras T.R."/>
            <person name="Gojobori T."/>
            <person name="Green R.E."/>
            <person name="Gustincich S."/>
            <person name="Harbers M."/>
            <person name="Hayashi Y."/>
            <person name="Hensch T.K."/>
            <person name="Hirokawa N."/>
            <person name="Hill D."/>
            <person name="Huminiecki L."/>
            <person name="Iacono M."/>
            <person name="Ikeo K."/>
            <person name="Iwama A."/>
            <person name="Ishikawa T."/>
            <person name="Jakt M."/>
            <person name="Kanapin A."/>
            <person name="Katoh M."/>
            <person name="Kawasawa Y."/>
            <person name="Kelso J."/>
            <person name="Kitamura H."/>
            <person name="Kitano H."/>
            <person name="Kollias G."/>
            <person name="Krishnan S.P."/>
            <person name="Kruger A."/>
            <person name="Kummerfeld S.K."/>
            <person name="Kurochkin I.V."/>
            <person name="Lareau L.F."/>
            <person name="Lazarevic D."/>
            <person name="Lipovich L."/>
            <person name="Liu J."/>
            <person name="Liuni S."/>
            <person name="McWilliam S."/>
            <person name="Madan Babu M."/>
            <person name="Madera M."/>
            <person name="Marchionni L."/>
            <person name="Matsuda H."/>
            <person name="Matsuzawa S."/>
            <person name="Miki H."/>
            <person name="Mignone F."/>
            <person name="Miyake S."/>
            <person name="Morris K."/>
            <person name="Mottagui-Tabar S."/>
            <person name="Mulder N."/>
            <person name="Nakano N."/>
            <person name="Nakauchi H."/>
            <person name="Ng P."/>
            <person name="Nilsson R."/>
            <person name="Nishiguchi S."/>
            <person name="Nishikawa S."/>
            <person name="Nori F."/>
            <person name="Ohara O."/>
            <person name="Okazaki Y."/>
            <person name="Orlando V."/>
            <person name="Pang K.C."/>
            <person name="Pavan W.J."/>
            <person name="Pavesi G."/>
            <person name="Pesole G."/>
            <person name="Petrovsky N."/>
            <person name="Piazza S."/>
            <person name="Reed J."/>
            <person name="Reid J.F."/>
            <person name="Ring B.Z."/>
            <person name="Ringwald M."/>
            <person name="Rost B."/>
            <person name="Ruan Y."/>
            <person name="Salzberg S.L."/>
            <person name="Sandelin A."/>
            <person name="Schneider C."/>
            <person name="Schoenbach C."/>
            <person name="Sekiguchi K."/>
            <person name="Semple C.A."/>
            <person name="Seno S."/>
            <person name="Sessa L."/>
            <person name="Sheng Y."/>
            <person name="Shibata Y."/>
            <person name="Shimada H."/>
            <person name="Shimada K."/>
            <person name="Silva D."/>
            <person name="Sinclair B."/>
            <person name="Sperling S."/>
            <person name="Stupka E."/>
            <person name="Sugiura K."/>
            <person name="Sultana R."/>
            <person name="Takenaka Y."/>
            <person name="Taki K."/>
            <person name="Tammoja K."/>
            <person name="Tan S.L."/>
            <person name="Tang S."/>
            <person name="Taylor M.S."/>
            <person name="Tegner J."/>
            <person name="Teichmann S.A."/>
            <person name="Ueda H.R."/>
            <person name="van Nimwegen E."/>
            <person name="Verardo R."/>
            <person name="Wei C.L."/>
            <person name="Yagi K."/>
            <person name="Yamanishi H."/>
            <person name="Zabarovsky E."/>
            <person name="Zhu S."/>
            <person name="Zimmer A."/>
            <person name="Hide W."/>
            <person name="Bult C."/>
            <person name="Grimmond S.M."/>
            <person name="Teasdale R.D."/>
            <person name="Liu E.T."/>
            <person name="Brusic V."/>
            <person name="Quackenbush J."/>
            <person name="Wahlestedt C."/>
            <person name="Mattick J.S."/>
            <person name="Hume D.A."/>
            <person name="Kai C."/>
            <person name="Sasaki D."/>
            <person name="Tomaru Y."/>
            <person name="Fukuda S."/>
            <person name="Kanamori-Katayama M."/>
            <person name="Suzuki M."/>
            <person name="Aoki J."/>
            <person name="Arakawa T."/>
            <person name="Iida J."/>
            <person name="Imamura K."/>
            <person name="Itoh M."/>
            <person name="Kato T."/>
            <person name="Kawaji H."/>
            <person name="Kawagashira N."/>
            <person name="Kawashima T."/>
            <person name="Kojima M."/>
            <person name="Kondo S."/>
            <person name="Konno H."/>
            <person name="Nakano K."/>
            <person name="Ninomiya N."/>
            <person name="Nishio T."/>
            <person name="Okada M."/>
            <person name="Plessy C."/>
            <person name="Shibata K."/>
            <person name="Shiraki T."/>
            <person name="Suzuki S."/>
            <person name="Tagami M."/>
            <person name="Waki K."/>
            <person name="Watahiki A."/>
            <person name="Okamura-Oho Y."/>
            <person name="Suzuki H."/>
            <person name="Kawai J."/>
            <person name="Hayashizaki Y."/>
        </authorList>
    </citation>
    <scope>NUCLEOTIDE SEQUENCE [LARGE SCALE MRNA] (ISOFORMS 1 AND 2)</scope>
    <source>
        <strain>C57BL/6J</strain>
        <tissue>Amnion</tissue>
        <tissue>Head</tissue>
        <tissue>Inner ear</tissue>
        <tissue>Mammary gland</tissue>
        <tissue>Stomach</tissue>
    </source>
</reference>
<reference key="3">
    <citation type="journal article" date="2004" name="Genome Res.">
        <title>The status, quality, and expansion of the NIH full-length cDNA project: the Mammalian Gene Collection (MGC).</title>
        <authorList>
            <consortium name="The MGC Project Team"/>
        </authorList>
    </citation>
    <scope>NUCLEOTIDE SEQUENCE [LARGE SCALE MRNA] (ISOFORM 1)</scope>
    <source>
        <strain>Czech II</strain>
        <tissue>Mammary tumor</tissue>
    </source>
</reference>
<reference key="4">
    <citation type="journal article" date="2004" name="Mech. Dev.">
        <title>Mouse Nkd1, a Wnt antagonist, exhibits oscillatory gene expression in the PSM under the control of Notch signaling.</title>
        <authorList>
            <person name="Ishikawa A."/>
            <person name="Kitajima S."/>
            <person name="Takahashi Y."/>
            <person name="Kokubo H."/>
            <person name="Kanno J."/>
            <person name="Inoue T."/>
            <person name="Saga Y."/>
        </authorList>
    </citation>
    <scope>DEVELOPMENTAL STAGE</scope>
</reference>
<reference key="5">
    <citation type="journal article" date="2004" name="Proc. Natl. Acad. Sci. U.S.A.">
        <title>Myristoylated Naked2 escorts transforming growth factor alpha to the basolateral plasma membrane of polarized epithelial cells.</title>
        <authorList>
            <person name="Li C."/>
            <person name="Franklin J.L."/>
            <person name="Graves-Deal R."/>
            <person name="Jerome W.G."/>
            <person name="Cao Z."/>
            <person name="Coffey R.J."/>
        </authorList>
    </citation>
    <scope>TISSUE SPECIFICITY</scope>
</reference>
<reference key="6">
    <citation type="journal article" date="2005" name="J. Biol. Chem.">
        <title>A targeted mutation of Nkd1 impairs mouse spermatogenesis.</title>
        <authorList>
            <person name="Li Q."/>
            <person name="Ishikawa T.O."/>
            <person name="Miyoshi H."/>
            <person name="Oshima M."/>
            <person name="Taketo M.M."/>
        </authorList>
    </citation>
    <scope>TISSUE SPECIFICITY</scope>
</reference>
<reference key="7">
    <citation type="journal article" date="2007" name="Dev. Biol.">
        <title>Identification of oscillatory genes in somitogenesis from functional genomic analysis of a human mesenchymal stem cell model.</title>
        <authorList>
            <person name="William D.A."/>
            <person name="Saitta B."/>
            <person name="Gibson J.D."/>
            <person name="Traas J."/>
            <person name="Markov V."/>
            <person name="Gonzalez D.M."/>
            <person name="Sewell W."/>
            <person name="Anderson D.M."/>
            <person name="Pratt S.C."/>
            <person name="Rappaport E.F."/>
            <person name="Kusumi K."/>
        </authorList>
    </citation>
    <scope>DEVELOPMENTAL STAGE</scope>
</reference>
<reference key="8">
    <citation type="journal article" date="2007" name="Mol. Cell. Biol.">
        <title>Viable mice with compound mutations in the Wnt/Dvl pathway antagonists nkd1 and nkd2.</title>
        <authorList>
            <person name="Zhang S."/>
            <person name="Cagatay T."/>
            <person name="Amanai M."/>
            <person name="Zhang M."/>
            <person name="Kline J."/>
            <person name="Castrillon D.H."/>
            <person name="Ashfaq R."/>
            <person name="Oez O.K."/>
            <person name="Wharton K.A. Jr."/>
        </authorList>
    </citation>
    <scope>DEVELOPMENTAL STAGE</scope>
</reference>
<accession>Q8VE28</accession>
<accession>Q3TYU5</accession>
<accession>Q3UM34</accession>
<accession>Q8C4J8</accession>
<accession>Q91Y45</accession>
<accession>Q9D7U9</accession>
<name>NKD2_MOUSE</name>
<dbReference type="EMBL" id="AF358136">
    <property type="protein sequence ID" value="AAK57485.1"/>
    <property type="molecule type" value="mRNA"/>
</dbReference>
<dbReference type="EMBL" id="AK008814">
    <property type="protein sequence ID" value="BAB25908.1"/>
    <property type="molecule type" value="mRNA"/>
</dbReference>
<dbReference type="EMBL" id="AK081904">
    <property type="protein sequence ID" value="BAC38367.1"/>
    <property type="molecule type" value="mRNA"/>
</dbReference>
<dbReference type="EMBL" id="AK145155">
    <property type="protein sequence ID" value="BAE26264.1"/>
    <property type="molecule type" value="mRNA"/>
</dbReference>
<dbReference type="EMBL" id="AK146667">
    <property type="protein sequence ID" value="BAE27345.1"/>
    <property type="molecule type" value="mRNA"/>
</dbReference>
<dbReference type="EMBL" id="AK158350">
    <property type="protein sequence ID" value="BAE34467.1"/>
    <property type="molecule type" value="mRNA"/>
</dbReference>
<dbReference type="EMBL" id="BC019952">
    <property type="protein sequence ID" value="AAH19952.1"/>
    <property type="molecule type" value="mRNA"/>
</dbReference>
<dbReference type="CCDS" id="CCDS26636.1">
    <molecule id="Q8VE28-1"/>
</dbReference>
<dbReference type="CCDS" id="CCDS84036.1">
    <molecule id="Q8VE28-2"/>
</dbReference>
<dbReference type="RefSeq" id="NP_001334464.1">
    <molecule id="Q8VE28-2"/>
    <property type="nucleotide sequence ID" value="NM_001347535.1"/>
</dbReference>
<dbReference type="RefSeq" id="NP_082462.3">
    <molecule id="Q8VE28-1"/>
    <property type="nucleotide sequence ID" value="NM_028186.5"/>
</dbReference>
<dbReference type="BioGRID" id="215287">
    <property type="interactions" value="5"/>
</dbReference>
<dbReference type="FunCoup" id="Q8VE28">
    <property type="interactions" value="374"/>
</dbReference>
<dbReference type="IntAct" id="Q8VE28">
    <property type="interactions" value="9"/>
</dbReference>
<dbReference type="STRING" id="10090.ENSMUSP00000022051"/>
<dbReference type="GlyGen" id="Q8VE28">
    <property type="glycosylation" value="1 site"/>
</dbReference>
<dbReference type="iPTMnet" id="Q8VE28"/>
<dbReference type="PhosphoSitePlus" id="Q8VE28"/>
<dbReference type="PaxDb" id="10090-ENSMUSP00000022051"/>
<dbReference type="ProteomicsDB" id="287426">
    <molecule id="Q8VE28-1"/>
</dbReference>
<dbReference type="ProteomicsDB" id="287427">
    <molecule id="Q8VE28-2"/>
</dbReference>
<dbReference type="Antibodypedia" id="22295">
    <property type="antibodies" value="154 antibodies from 28 providers"/>
</dbReference>
<dbReference type="Ensembl" id="ENSMUST00000022051.14">
    <molecule id="Q8VE28-1"/>
    <property type="protein sequence ID" value="ENSMUSP00000022051.8"/>
    <property type="gene ID" value="ENSMUSG00000021567.16"/>
</dbReference>
<dbReference type="Ensembl" id="ENSMUST00000118096.2">
    <molecule id="Q8VE28-2"/>
    <property type="protein sequence ID" value="ENSMUSP00000113794.2"/>
    <property type="gene ID" value="ENSMUSG00000021567.16"/>
</dbReference>
<dbReference type="GeneID" id="72293"/>
<dbReference type="KEGG" id="mmu:72293"/>
<dbReference type="UCSC" id="uc007ref.2">
    <molecule id="Q8VE28-1"/>
    <property type="organism name" value="mouse"/>
</dbReference>
<dbReference type="UCSC" id="uc007reg.2">
    <molecule id="Q8VE28-2"/>
    <property type="organism name" value="mouse"/>
</dbReference>
<dbReference type="AGR" id="MGI:1919543"/>
<dbReference type="CTD" id="85409"/>
<dbReference type="MGI" id="MGI:1919543">
    <property type="gene designation" value="Nkd2"/>
</dbReference>
<dbReference type="VEuPathDB" id="HostDB:ENSMUSG00000021567"/>
<dbReference type="eggNOG" id="ENOG502QT1X">
    <property type="taxonomic scope" value="Eukaryota"/>
</dbReference>
<dbReference type="GeneTree" id="ENSGT00440000033589"/>
<dbReference type="HOGENOM" id="CLU_035610_1_0_1"/>
<dbReference type="InParanoid" id="Q8VE28"/>
<dbReference type="OMA" id="RQEHHGK"/>
<dbReference type="OrthoDB" id="5953812at2759"/>
<dbReference type="PhylomeDB" id="Q8VE28"/>
<dbReference type="TreeFam" id="TF328786"/>
<dbReference type="BioGRID-ORCS" id="72293">
    <property type="hits" value="1 hit in 79 CRISPR screens"/>
</dbReference>
<dbReference type="ChiTaRS" id="Nkd2">
    <property type="organism name" value="mouse"/>
</dbReference>
<dbReference type="PRO" id="PR:Q8VE28"/>
<dbReference type="Proteomes" id="UP000000589">
    <property type="component" value="Chromosome 13"/>
</dbReference>
<dbReference type="RNAct" id="Q8VE28">
    <property type="molecule type" value="protein"/>
</dbReference>
<dbReference type="Bgee" id="ENSMUSG00000021567">
    <property type="expression patterns" value="Expressed in embryonic post-anal tail and 164 other cell types or tissues"/>
</dbReference>
<dbReference type="ExpressionAtlas" id="Q8VE28">
    <property type="expression patterns" value="baseline and differential"/>
</dbReference>
<dbReference type="GO" id="GO:0016323">
    <property type="term" value="C:basolateral plasma membrane"/>
    <property type="evidence" value="ECO:0007669"/>
    <property type="project" value="Ensembl"/>
</dbReference>
<dbReference type="GO" id="GO:0070382">
    <property type="term" value="C:exocytic vesicle"/>
    <property type="evidence" value="ECO:0007669"/>
    <property type="project" value="Ensembl"/>
</dbReference>
<dbReference type="GO" id="GO:0016328">
    <property type="term" value="C:lateral plasma membrane"/>
    <property type="evidence" value="ECO:0007669"/>
    <property type="project" value="Ensembl"/>
</dbReference>
<dbReference type="GO" id="GO:0051117">
    <property type="term" value="F:ATPase binding"/>
    <property type="evidence" value="ECO:0007669"/>
    <property type="project" value="Ensembl"/>
</dbReference>
<dbReference type="GO" id="GO:0005509">
    <property type="term" value="F:calcium ion binding"/>
    <property type="evidence" value="ECO:0007669"/>
    <property type="project" value="InterPro"/>
</dbReference>
<dbReference type="GO" id="GO:0019838">
    <property type="term" value="F:growth factor binding"/>
    <property type="evidence" value="ECO:0007669"/>
    <property type="project" value="Ensembl"/>
</dbReference>
<dbReference type="GO" id="GO:0032036">
    <property type="term" value="F:myosin heavy chain binding"/>
    <property type="evidence" value="ECO:0007669"/>
    <property type="project" value="Ensembl"/>
</dbReference>
<dbReference type="GO" id="GO:0031625">
    <property type="term" value="F:ubiquitin protein ligase binding"/>
    <property type="evidence" value="ECO:0007669"/>
    <property type="project" value="Ensembl"/>
</dbReference>
<dbReference type="GO" id="GO:0006887">
    <property type="term" value="P:exocytosis"/>
    <property type="evidence" value="ECO:0007669"/>
    <property type="project" value="UniProtKB-KW"/>
</dbReference>
<dbReference type="GO" id="GO:0048210">
    <property type="term" value="P:Golgi vesicle fusion to target membrane"/>
    <property type="evidence" value="ECO:0007669"/>
    <property type="project" value="Ensembl"/>
</dbReference>
<dbReference type="GO" id="GO:0090090">
    <property type="term" value="P:negative regulation of canonical Wnt signaling pathway"/>
    <property type="evidence" value="ECO:0007669"/>
    <property type="project" value="Ensembl"/>
</dbReference>
<dbReference type="GO" id="GO:0032436">
    <property type="term" value="P:positive regulation of proteasomal ubiquitin-dependent protein catabolic process"/>
    <property type="evidence" value="ECO:0007669"/>
    <property type="project" value="Ensembl"/>
</dbReference>
<dbReference type="GO" id="GO:1903078">
    <property type="term" value="P:positive regulation of protein localization to plasma membrane"/>
    <property type="evidence" value="ECO:0007669"/>
    <property type="project" value="Ensembl"/>
</dbReference>
<dbReference type="GO" id="GO:0010954">
    <property type="term" value="P:positive regulation of protein processing"/>
    <property type="evidence" value="ECO:0007669"/>
    <property type="project" value="Ensembl"/>
</dbReference>
<dbReference type="GO" id="GO:0072659">
    <property type="term" value="P:protein localization to plasma membrane"/>
    <property type="evidence" value="ECO:0007669"/>
    <property type="project" value="Ensembl"/>
</dbReference>
<dbReference type="GO" id="GO:0016055">
    <property type="term" value="P:Wnt signaling pathway"/>
    <property type="evidence" value="ECO:0007669"/>
    <property type="project" value="UniProtKB-KW"/>
</dbReference>
<dbReference type="Gene3D" id="1.10.238.10">
    <property type="entry name" value="EF-hand"/>
    <property type="match status" value="1"/>
</dbReference>
<dbReference type="InterPro" id="IPR011992">
    <property type="entry name" value="EF-hand-dom_pair"/>
</dbReference>
<dbReference type="InterPro" id="IPR018247">
    <property type="entry name" value="EF_Hand_1_Ca_BS"/>
</dbReference>
<dbReference type="InterPro" id="IPR002048">
    <property type="entry name" value="EF_hand_dom"/>
</dbReference>
<dbReference type="InterPro" id="IPR040140">
    <property type="entry name" value="Nkd-like"/>
</dbReference>
<dbReference type="PANTHER" id="PTHR22611">
    <property type="entry name" value="PROTEIN NAKED CUTICLE"/>
    <property type="match status" value="1"/>
</dbReference>
<dbReference type="PANTHER" id="PTHR22611:SF1">
    <property type="entry name" value="PROTEIN NAKED CUTICLE HOMOLOG 2"/>
    <property type="match status" value="1"/>
</dbReference>
<dbReference type="SUPFAM" id="SSF47473">
    <property type="entry name" value="EF-hand"/>
    <property type="match status" value="1"/>
</dbReference>
<dbReference type="PROSITE" id="PS00018">
    <property type="entry name" value="EF_HAND_1"/>
    <property type="match status" value="1"/>
</dbReference>
<dbReference type="PROSITE" id="PS50222">
    <property type="entry name" value="EF_HAND_2"/>
    <property type="match status" value="1"/>
</dbReference>
<protein>
    <recommendedName>
        <fullName>Protein naked cuticle homolog 2</fullName>
        <shortName>Naked-2</shortName>
        <shortName>mNkd2</shortName>
    </recommendedName>
</protein>
<organism>
    <name type="scientific">Mus musculus</name>
    <name type="common">Mouse</name>
    <dbReference type="NCBI Taxonomy" id="10090"/>
    <lineage>
        <taxon>Eukaryota</taxon>
        <taxon>Metazoa</taxon>
        <taxon>Chordata</taxon>
        <taxon>Craniata</taxon>
        <taxon>Vertebrata</taxon>
        <taxon>Euteleostomi</taxon>
        <taxon>Mammalia</taxon>
        <taxon>Eutheria</taxon>
        <taxon>Euarchontoglires</taxon>
        <taxon>Glires</taxon>
        <taxon>Rodentia</taxon>
        <taxon>Myomorpha</taxon>
        <taxon>Muroidea</taxon>
        <taxon>Muridae</taxon>
        <taxon>Murinae</taxon>
        <taxon>Mus</taxon>
        <taxon>Mus</taxon>
    </lineage>
</organism>
<feature type="initiator methionine" description="Removed">
    <location>
        <position position="1"/>
    </location>
</feature>
<feature type="chain" id="PRO_0000301994" description="Protein naked cuticle homolog 2">
    <location>
        <begin position="2"/>
        <end position="461"/>
    </location>
</feature>
<feature type="domain" description="EF-hand" evidence="3">
    <location>
        <begin position="127"/>
        <end position="162"/>
    </location>
</feature>
<feature type="region of interest" description="Disordered" evidence="4">
    <location>
        <begin position="1"/>
        <end position="106"/>
    </location>
</feature>
<feature type="region of interest" description="Interaction with DVL1, DVL2 and DVL3" evidence="5">
    <location>
        <begin position="121"/>
        <end position="186"/>
    </location>
</feature>
<feature type="region of interest" description="Disordered" evidence="4">
    <location>
        <begin position="176"/>
        <end position="205"/>
    </location>
</feature>
<feature type="region of interest" description="Disordered" evidence="4">
    <location>
        <begin position="263"/>
        <end position="302"/>
    </location>
</feature>
<feature type="region of interest" description="Interaction with TGFA" evidence="1">
    <location>
        <begin position="307"/>
        <end position="396"/>
    </location>
</feature>
<feature type="region of interest" description="Disordered" evidence="4">
    <location>
        <begin position="321"/>
        <end position="359"/>
    </location>
</feature>
<feature type="region of interest" description="Disordered" evidence="4">
    <location>
        <begin position="372"/>
        <end position="414"/>
    </location>
</feature>
<feature type="region of interest" description="Disordered" evidence="4">
    <location>
        <begin position="441"/>
        <end position="461"/>
    </location>
</feature>
<feature type="compositionally biased region" description="Basic and acidic residues" evidence="4">
    <location>
        <begin position="34"/>
        <end position="73"/>
    </location>
</feature>
<feature type="compositionally biased region" description="Basic and acidic residues" evidence="4">
    <location>
        <begin position="97"/>
        <end position="106"/>
    </location>
</feature>
<feature type="compositionally biased region" description="Basic and acidic residues" evidence="4">
    <location>
        <begin position="188"/>
        <end position="205"/>
    </location>
</feature>
<feature type="compositionally biased region" description="Low complexity" evidence="4">
    <location>
        <begin position="341"/>
        <end position="350"/>
    </location>
</feature>
<feature type="compositionally biased region" description="Pro residues" evidence="4">
    <location>
        <begin position="380"/>
        <end position="390"/>
    </location>
</feature>
<feature type="binding site" evidence="3">
    <location>
        <position position="140"/>
    </location>
    <ligand>
        <name>Ca(2+)</name>
        <dbReference type="ChEBI" id="CHEBI:29108"/>
    </ligand>
</feature>
<feature type="binding site" evidence="3">
    <location>
        <position position="142"/>
    </location>
    <ligand>
        <name>Ca(2+)</name>
        <dbReference type="ChEBI" id="CHEBI:29108"/>
    </ligand>
</feature>
<feature type="binding site" evidence="3">
    <location>
        <position position="144"/>
    </location>
    <ligand>
        <name>Ca(2+)</name>
        <dbReference type="ChEBI" id="CHEBI:29108"/>
    </ligand>
</feature>
<feature type="binding site" evidence="3">
    <location>
        <position position="146"/>
    </location>
    <ligand>
        <name>Ca(2+)</name>
        <dbReference type="ChEBI" id="CHEBI:29108"/>
    </ligand>
</feature>
<feature type="binding site" evidence="3">
    <location>
        <position position="151"/>
    </location>
    <ligand>
        <name>Ca(2+)</name>
        <dbReference type="ChEBI" id="CHEBI:29108"/>
    </ligand>
</feature>
<feature type="lipid moiety-binding region" description="N-myristoyl glycine" evidence="1">
    <location>
        <position position="2"/>
    </location>
</feature>
<feature type="splice variant" id="VSP_027902" description="In isoform 2." evidence="11">
    <location>
        <begin position="9"/>
        <end position="20"/>
    </location>
</feature>
<feature type="sequence conflict" description="In Ref. 2; BAE26264 and 3; AAH19952." evidence="12" ref="2 3">
    <original>V</original>
    <variation>A</variation>
    <location>
        <position position="77"/>
    </location>
</feature>
<feature type="sequence conflict" description="In Ref. 3; AAH19952." evidence="12" ref="3">
    <original>V</original>
    <variation>A</variation>
    <location>
        <position position="217"/>
    </location>
</feature>
<feature type="sequence conflict" description="In Ref. 2; BAB25908." evidence="12" ref="2">
    <original>N</original>
    <variation>S</variation>
    <location>
        <position position="317"/>
    </location>
</feature>
<feature type="sequence conflict" description="In Ref. 2; BAE26264/BAE34467 and 3; AAH19952." evidence="12" ref="2 3">
    <original>I</original>
    <variation>L</variation>
    <location>
        <position position="330"/>
    </location>
</feature>
<feature type="sequence conflict" description="In Ref. 2; BAE26264/BAE34467 and 3; AAH19952." evidence="12" ref="2 3">
    <original>S</original>
    <variation>G</variation>
    <location>
        <position position="372"/>
    </location>
</feature>
<evidence type="ECO:0000250" key="1"/>
<evidence type="ECO:0000250" key="2">
    <source>
        <dbReference type="UniProtKB" id="Q969F2"/>
    </source>
</evidence>
<evidence type="ECO:0000255" key="3">
    <source>
        <dbReference type="PROSITE-ProRule" id="PRU00448"/>
    </source>
</evidence>
<evidence type="ECO:0000256" key="4">
    <source>
        <dbReference type="SAM" id="MobiDB-lite"/>
    </source>
</evidence>
<evidence type="ECO:0000269" key="5">
    <source>
    </source>
</evidence>
<evidence type="ECO:0000269" key="6">
    <source>
    </source>
</evidence>
<evidence type="ECO:0000269" key="7">
    <source>
    </source>
</evidence>
<evidence type="ECO:0000269" key="8">
    <source>
    </source>
</evidence>
<evidence type="ECO:0000269" key="9">
    <source>
    </source>
</evidence>
<evidence type="ECO:0000269" key="10">
    <source>
    </source>
</evidence>
<evidence type="ECO:0000303" key="11">
    <source>
    </source>
</evidence>
<evidence type="ECO:0000305" key="12"/>
<keyword id="KW-0025">Alternative splicing</keyword>
<keyword id="KW-0106">Calcium</keyword>
<keyword id="KW-1003">Cell membrane</keyword>
<keyword id="KW-0963">Cytoplasm</keyword>
<keyword id="KW-0968">Cytoplasmic vesicle</keyword>
<keyword id="KW-0268">Exocytosis</keyword>
<keyword id="KW-0449">Lipoprotein</keyword>
<keyword id="KW-0472">Membrane</keyword>
<keyword id="KW-0479">Metal-binding</keyword>
<keyword id="KW-0519">Myristate</keyword>
<keyword id="KW-1185">Reference proteome</keyword>
<keyword id="KW-0813">Transport</keyword>
<keyword id="KW-0832">Ubl conjugation</keyword>
<keyword id="KW-0879">Wnt signaling pathway</keyword>
<comment type="function">
    <text evidence="1">Cell autonomous antagonist of the canonical Wnt signaling pathway. May activate a second Wnt signaling pathway that controls planar cell polarity. Required for processing of TGFA and for targeting of TGFA to the basolateral membrane of polarized epithelial cells (By similarity).</text>
</comment>
<comment type="subunit">
    <text evidence="1 5">Interacts with RNF25, TGFA (via cytoplasmic domain), and PPP2R3A (By similarity). Interacts with DVL1, DVL2 and DVL3.</text>
</comment>
<comment type="subcellular location">
    <subcellularLocation>
        <location evidence="2">Cell membrane</location>
    </subcellularLocation>
    <subcellularLocation>
        <location evidence="2">Cytoplasm</location>
    </subcellularLocation>
    <subcellularLocation>
        <location evidence="2">Cytoplasmic vesicle</location>
    </subcellularLocation>
</comment>
<comment type="alternative products">
    <event type="alternative splicing"/>
    <isoform>
        <id>Q8VE28-1</id>
        <name>1</name>
        <sequence type="displayed"/>
    </isoform>
    <isoform>
        <id>Q8VE28-2</id>
        <name>2</name>
        <sequence type="described" ref="VSP_027902"/>
    </isoform>
</comment>
<comment type="tissue specificity">
    <text evidence="5 6 8">Expressed in the cecum, colon, esophagus, ileum, jejunum, skin and stomach.</text>
</comment>
<comment type="developmental stage">
    <text evidence="5 7 9 10">Expressed in the forelimb buds, the branchial arches, the caudal presomitic mesoderm (PSM) and at the anterior and posterior of each somite boundary at 9.5 days postcoitum (dpc). Also expressed in the tailbud.</text>
</comment>
<comment type="domain">
    <text evidence="1">The N-terminal domain comprising the first 224 amino acid residues is mostly unstructured.</text>
</comment>
<comment type="PTM">
    <text evidence="1">Ubiquitinated, leading to rapid proteasomal degradation. Interaction with TGFA interferes with RNF25 binding and protects against ubiquitination mediated by RNF25 (By similarity).</text>
</comment>
<comment type="similarity">
    <text evidence="12">Belongs to the NKD family.</text>
</comment>
<proteinExistence type="evidence at protein level"/>
<gene>
    <name type="primary">Nkd2</name>
</gene>
<sequence length="461" mass="51501">MGKFQSKHAAAACKRRESPEGDSFVVPAYGSGRRGAEETDRRAGSGVEHRSRDKQELLNGDPKEGPFWDDKGSLEVVLPPEKSEGHEGQGQLFSTDDGEKAASREGPLRLSKKHLNIDALQCDVSVEEDNRQEWTFTLYDFDNSGKVTREDMSSLMHTIYEVVDASVNHSSGSSKTLRVKLTVSPEPSSKKECPLTGQDREPTRGRTEIELTDEPRVADRRLSAYSRKPNADPQPCSVRVPYCVDENTERRNHYLDLAGIENYTSKFGPGSPPEQARQEHHGRATHIPSRSRSQESDAHAIHHRRSQVLAEHVIPANEPATRALAAQPRIKGQEKQFLRSPKGPGKPLGTPGSGKPGKALSYCLQAVPLPQSAQDGHHLPQPPPQPPPQPYGHKRYRQKAREGHSPLKGHGQPTMVEHEVVRDLPPMLGPEGYVMPVVQRHEHHHHHEHHHHHHHHHFHPS</sequence>